<comment type="function">
    <text evidence="3 5">Component of the intraflagellar transport (IFT) complex B: together with IFT81, forms a tubulin-binding module that specifically mediates transport of tubulin within the cilium. Binds beta-tubulin via its basic region. Required for ciliogenesis.</text>
</comment>
<comment type="subunit">
    <text evidence="3 4 5">Component of the IFT complex B, the core composed of IFT25, IFT27, IFT46, IFT52, IFT74, IFT81 and IFT88 as well as associated subunits IFT20, IFT57, IFT80 and IFT172. Interacts with IFT81; the interaction is direct: within the IFT complex B, IFT74 and IFT81 mediate the transport of tubulin within the cilium. Interacts (via basic region) with beta-tubulin (via acidic region); interaction is direct.</text>
</comment>
<comment type="subcellular location">
    <subcellularLocation>
        <location evidence="7">Cell projection</location>
        <location evidence="7">Cilium</location>
    </subcellularLocation>
</comment>
<comment type="similarity">
    <text evidence="6">Belongs to the IFT74 family.</text>
</comment>
<comment type="sequence caution" evidence="6">
    <conflict type="frameshift">
        <sequence resource="EMBL-CDS" id="AAO92260"/>
    </conflict>
</comment>
<keyword id="KW-0002">3D-structure</keyword>
<keyword id="KW-0966">Cell projection</keyword>
<keyword id="KW-0969">Cilium</keyword>
<keyword id="KW-0970">Cilium biogenesis/degradation</keyword>
<keyword id="KW-0175">Coiled coil</keyword>
<proteinExistence type="evidence at protein level"/>
<accession>Q6RCE1</accession>
<accession>Q84P51</accession>
<organism>
    <name type="scientific">Chlamydomonas reinhardtii</name>
    <name type="common">Chlamydomonas smithii</name>
    <dbReference type="NCBI Taxonomy" id="3055"/>
    <lineage>
        <taxon>Eukaryota</taxon>
        <taxon>Viridiplantae</taxon>
        <taxon>Chlorophyta</taxon>
        <taxon>core chlorophytes</taxon>
        <taxon>Chlorophyceae</taxon>
        <taxon>CS clade</taxon>
        <taxon>Chlamydomonadales</taxon>
        <taxon>Chlamydomonadaceae</taxon>
        <taxon>Chlamydomonas</taxon>
    </lineage>
</organism>
<gene>
    <name type="primary">IFT74</name>
    <name type="synonym">IFT71</name>
    <name type="ORF">CHLREDRAFT_136521</name>
</gene>
<sequence>MDRPSSRGALALGAGGLGKAPTGGAVQQPDRPMTGQRGAAPAGPMRAPAGASIIGAGPPGTAMRGGPGPAGGPPGTAYKRMGTASQRPGTGQQAAAAAAAARAGQQLQVENRPITNHGVSGMKTAAAGVGRQVLDKNYFMNELRQKRMEIAQVTSNMKSDLEALERKQAQYNSMDKRASDLSKEVKILQEALADYNTVLDKVGSQAPVYVIQQEFAALKDRNEQQRKRVDEVLTERLNLESKAKQAESKMSEIQASMDQRLNSMPPSQRNEYTTLVAEQQQLQADSKRFEEVLDELDKALQASEGELARNPFKQRSLQLQEQIRALTEKKYELTEEERQSKRSPEELRADLMAKIKRDNTEVEQMTQQIRELQDQIKKMEERVKSLGGATSGAAAAEEKANREKFEELLAKERDLNNFMDGFPSRKAAKMQEKQQKEDGIVGVLEKMVKMQGIIGSNLPSQKKYKEMQDELEYKKMQLENTQTTQERLKEELTMRRTELEKIDTLEDKIKLELTQLAERQEAMEKEMGEFGSVEDIQRKANAARERMEGLRSVLLKRKDLLRSIVAERGLKFQAKRAQLQDHNLQVQLEKMEAKLKNLSAGVFEMDEFIKAKESETNYRQLASNIAALVDDLNVHVKKAVV</sequence>
<reference key="1">
    <citation type="journal article" date="2004" name="J. Cell Biol.">
        <title>Primary cilia of human endothelial cells disassemble under laminar shear stress.</title>
        <authorList>
            <person name="Iomini C."/>
            <person name="Tejada K."/>
            <person name="Mo W."/>
            <person name="Vaananen H."/>
            <person name="Piperno G."/>
        </authorList>
    </citation>
    <scope>NUCLEOTIDE SEQUENCE [MRNA]</scope>
</reference>
<reference key="2">
    <citation type="journal article" date="2004" name="J. Cell Biol.">
        <title>Intraflagellar transport (IFT) cargo: IFT transports flagellar precursors to the tip and turnover products to the cell body.</title>
        <authorList>
            <person name="Qin H."/>
            <person name="Diener D.R."/>
            <person name="Geimer S."/>
            <person name="Cole D.G."/>
            <person name="Rosenbaum J.L."/>
        </authorList>
    </citation>
    <scope>NUCLEOTIDE SEQUENCE [MRNA]</scope>
    <scope>FUNCTION</scope>
    <scope>IDENTIFICATION IN THE IFT COMPLEX B</scope>
</reference>
<reference key="3">
    <citation type="journal article" date="2007" name="Science">
        <title>The Chlamydomonas genome reveals the evolution of key animal and plant functions.</title>
        <authorList>
            <person name="Merchant S.S."/>
            <person name="Prochnik S.E."/>
            <person name="Vallon O."/>
            <person name="Harris E.H."/>
            <person name="Karpowicz S.J."/>
            <person name="Witman G.B."/>
            <person name="Terry A."/>
            <person name="Salamov A."/>
            <person name="Fritz-Laylin L.K."/>
            <person name="Marechal-Drouard L."/>
            <person name="Marshall W.F."/>
            <person name="Qu L.H."/>
            <person name="Nelson D.R."/>
            <person name="Sanderfoot A.A."/>
            <person name="Spalding M.H."/>
            <person name="Kapitonov V.V."/>
            <person name="Ren Q."/>
            <person name="Ferris P."/>
            <person name="Lindquist E."/>
            <person name="Shapiro H."/>
            <person name="Lucas S.M."/>
            <person name="Grimwood J."/>
            <person name="Schmutz J."/>
            <person name="Cardol P."/>
            <person name="Cerutti H."/>
            <person name="Chanfreau G."/>
            <person name="Chen C.L."/>
            <person name="Cognat V."/>
            <person name="Croft M.T."/>
            <person name="Dent R."/>
            <person name="Dutcher S."/>
            <person name="Fernandez E."/>
            <person name="Fukuzawa H."/>
            <person name="Gonzalez-Ballester D."/>
            <person name="Gonzalez-Halphen D."/>
            <person name="Hallmann A."/>
            <person name="Hanikenne M."/>
            <person name="Hippler M."/>
            <person name="Inwood W."/>
            <person name="Jabbari K."/>
            <person name="Kalanon M."/>
            <person name="Kuras R."/>
            <person name="Lefebvre P.A."/>
            <person name="Lemaire S.D."/>
            <person name="Lobanov A.V."/>
            <person name="Lohr M."/>
            <person name="Manuell A."/>
            <person name="Meier I."/>
            <person name="Mets L."/>
            <person name="Mittag M."/>
            <person name="Mittelmeier T."/>
            <person name="Moroney J.V."/>
            <person name="Moseley J."/>
            <person name="Napoli C."/>
            <person name="Nedelcu A.M."/>
            <person name="Niyogi K."/>
            <person name="Novoselov S.V."/>
            <person name="Paulsen I.T."/>
            <person name="Pazour G.J."/>
            <person name="Purton S."/>
            <person name="Ral J.P."/>
            <person name="Riano-Pachon D.M."/>
            <person name="Riekhof W."/>
            <person name="Rymarquis L."/>
            <person name="Schroda M."/>
            <person name="Stern D."/>
            <person name="Umen J."/>
            <person name="Willows R."/>
            <person name="Wilson N."/>
            <person name="Zimmer S.L."/>
            <person name="Allmer J."/>
            <person name="Balk J."/>
            <person name="Bisova K."/>
            <person name="Chen C.J."/>
            <person name="Elias M."/>
            <person name="Gendler K."/>
            <person name="Hauser C."/>
            <person name="Lamb M.R."/>
            <person name="Ledford H."/>
            <person name="Long J.C."/>
            <person name="Minagawa J."/>
            <person name="Page M.D."/>
            <person name="Pan J."/>
            <person name="Pootakham W."/>
            <person name="Roje S."/>
            <person name="Rose A."/>
            <person name="Stahlberg E."/>
            <person name="Terauchi A.M."/>
            <person name="Yang P."/>
            <person name="Ball S."/>
            <person name="Bowler C."/>
            <person name="Dieckmann C.L."/>
            <person name="Gladyshev V.N."/>
            <person name="Green P."/>
            <person name="Jorgensen R."/>
            <person name="Mayfield S."/>
            <person name="Mueller-Roeber B."/>
            <person name="Rajamani S."/>
            <person name="Sayre R.T."/>
            <person name="Brokstein P."/>
            <person name="Dubchak I."/>
            <person name="Goodstein D."/>
            <person name="Hornick L."/>
            <person name="Huang Y.W."/>
            <person name="Jhaveri J."/>
            <person name="Luo Y."/>
            <person name="Martinez D."/>
            <person name="Ngau W.C."/>
            <person name="Otillar B."/>
            <person name="Poliakov A."/>
            <person name="Porter A."/>
            <person name="Szajkowski L."/>
            <person name="Werner G."/>
            <person name="Zhou K."/>
            <person name="Grigoriev I.V."/>
            <person name="Rokhsar D.S."/>
            <person name="Grossman A.R."/>
        </authorList>
    </citation>
    <scope>NUCLEOTIDE SEQUENCE [LARGE SCALE GENOMIC DNA]</scope>
    <source>
        <strain>CC-503</strain>
    </source>
</reference>
<reference key="4">
    <citation type="journal article" date="2005" name="J. Biol. Chem.">
        <title>Characterization of the intraflagellar transport complex B core: direct interaction of the IFT81 and IFT74/72 subunits.</title>
        <authorList>
            <person name="Lucker B.F."/>
            <person name="Behal R.H."/>
            <person name="Qin H."/>
            <person name="Siron L.C."/>
            <person name="Taggart W.D."/>
            <person name="Rosenbaum J.L."/>
            <person name="Cole D.G."/>
        </authorList>
    </citation>
    <scope>IDENTIFICATION IN THE IFT COMPLEX B</scope>
</reference>
<reference key="5">
    <citation type="journal article" date="2013" name="Science">
        <title>Molecular basis of tubulin transport within the cilium by IFT74 and IFT81.</title>
        <authorList>
            <person name="Bhogaraju S."/>
            <person name="Cajanek L."/>
            <person name="Fort C."/>
            <person name="Blisnick T."/>
            <person name="Weber K."/>
            <person name="Taschner M."/>
            <person name="Mizuno N."/>
            <person name="Lamla S."/>
            <person name="Bastin P."/>
            <person name="Nigg E.A."/>
            <person name="Lorentzen E."/>
        </authorList>
    </citation>
    <scope>FUNCTION</scope>
    <scope>SUBCELLULAR LOCATION</scope>
    <scope>IDENTIFICATION IN THE IFT COMPLEX B</scope>
    <scope>INTERACTION WITH BETA-TUBULIN AND IFT81</scope>
</reference>
<evidence type="ECO:0000255" key="1"/>
<evidence type="ECO:0000256" key="2">
    <source>
        <dbReference type="SAM" id="MobiDB-lite"/>
    </source>
</evidence>
<evidence type="ECO:0000269" key="3">
    <source>
    </source>
</evidence>
<evidence type="ECO:0000269" key="4">
    <source>
    </source>
</evidence>
<evidence type="ECO:0000269" key="5">
    <source>
    </source>
</evidence>
<evidence type="ECO:0000305" key="6"/>
<evidence type="ECO:0000305" key="7">
    <source>
    </source>
</evidence>
<protein>
    <recommendedName>
        <fullName>Intraflagellar transport protein 74</fullName>
    </recommendedName>
    <alternativeName>
        <fullName>Intraflagellar transport protein 71</fullName>
        <shortName>IFT-71</shortName>
    </alternativeName>
    <alternativeName>
        <fullName>Intraflagellar transport protein 72</fullName>
        <shortName>IFT74/72</shortName>
    </alternativeName>
</protein>
<dbReference type="EMBL" id="AY505143">
    <property type="protein sequence ID" value="AAS48648.1"/>
    <property type="molecule type" value="mRNA"/>
</dbReference>
<dbReference type="EMBL" id="AY245434">
    <property type="protein sequence ID" value="AAO92260.1"/>
    <property type="status" value="ALT_FRAME"/>
    <property type="molecule type" value="mRNA"/>
</dbReference>
<dbReference type="EMBL" id="DS496108">
    <property type="protein sequence ID" value="EDP09301.1"/>
    <property type="molecule type" value="Genomic_DNA"/>
</dbReference>
<dbReference type="RefSeq" id="XP_001689563.1">
    <property type="nucleotide sequence ID" value="XM_001689511.1"/>
</dbReference>
<dbReference type="PDB" id="8BD7">
    <property type="method" value="EM"/>
    <property type="resolution" value="9.90 A"/>
    <property type="chains" value="G/Q=1-641"/>
</dbReference>
<dbReference type="PDB" id="8RUY">
    <property type="method" value="EM"/>
    <property type="resolution" value="15.40 A"/>
    <property type="chains" value="O=1-641"/>
</dbReference>
<dbReference type="PDBsum" id="8BD7"/>
<dbReference type="PDBsum" id="8RUY"/>
<dbReference type="EMDB" id="EMD-15977"/>
<dbReference type="EMDB" id="EMD-19515"/>
<dbReference type="SMR" id="Q6RCE1"/>
<dbReference type="PaxDb" id="3055-EDP09301"/>
<dbReference type="EnsemblPlants" id="PNW88405">
    <property type="protein sequence ID" value="PNW88405"/>
    <property type="gene ID" value="CHLRE_01g027950v5"/>
</dbReference>
<dbReference type="GeneID" id="5715315"/>
<dbReference type="Gramene" id="PNW88405">
    <property type="protein sequence ID" value="PNW88405"/>
    <property type="gene ID" value="CHLRE_01g027950v5"/>
</dbReference>
<dbReference type="KEGG" id="cre:CHLRE_01g027950v5"/>
<dbReference type="eggNOG" id="ENOG502QS4E">
    <property type="taxonomic scope" value="Eukaryota"/>
</dbReference>
<dbReference type="HOGENOM" id="CLU_027673_0_0_1"/>
<dbReference type="OrthoDB" id="444379at2759"/>
<dbReference type="GO" id="GO:0030992">
    <property type="term" value="C:intraciliary transport particle B"/>
    <property type="evidence" value="ECO:0000314"/>
    <property type="project" value="UniProtKB"/>
</dbReference>
<dbReference type="GO" id="GO:0031514">
    <property type="term" value="C:motile cilium"/>
    <property type="evidence" value="ECO:0000314"/>
    <property type="project" value="BHF-UCL"/>
</dbReference>
<dbReference type="GO" id="GO:0048487">
    <property type="term" value="F:beta-tubulin binding"/>
    <property type="evidence" value="ECO:0000314"/>
    <property type="project" value="UniProtKB"/>
</dbReference>
<dbReference type="GO" id="GO:0060271">
    <property type="term" value="P:cilium assembly"/>
    <property type="evidence" value="ECO:0000315"/>
    <property type="project" value="UniProtKB"/>
</dbReference>
<dbReference type="GO" id="GO:0035735">
    <property type="term" value="P:intraciliary transport involved in cilium assembly"/>
    <property type="evidence" value="ECO:0000315"/>
    <property type="project" value="UniProtKB"/>
</dbReference>
<dbReference type="Gene3D" id="1.10.287.1490">
    <property type="match status" value="1"/>
</dbReference>
<dbReference type="InterPro" id="IPR029602">
    <property type="entry name" value="IFT74"/>
</dbReference>
<dbReference type="PANTHER" id="PTHR31432">
    <property type="entry name" value="INTRAFLAGELLAR TRANSPORT PROTEIN 74 HOMOLOG"/>
    <property type="match status" value="1"/>
</dbReference>
<dbReference type="PANTHER" id="PTHR31432:SF0">
    <property type="entry name" value="INTRAFLAGELLAR TRANSPORT PROTEIN 74 HOMOLOG"/>
    <property type="match status" value="1"/>
</dbReference>
<name>IFT74_CHLRE</name>
<feature type="chain" id="PRO_0000424813" description="Intraflagellar transport protein 74">
    <location>
        <begin position="1"/>
        <end position="641"/>
    </location>
</feature>
<feature type="region of interest" description="Basic region">
    <location>
        <begin position="1"/>
        <end position="132"/>
    </location>
</feature>
<feature type="region of interest" description="Disordered" evidence="2">
    <location>
        <begin position="1"/>
        <end position="99"/>
    </location>
</feature>
<feature type="coiled-coil region" evidence="1">
    <location>
        <begin position="139"/>
        <end position="633"/>
    </location>
</feature>
<feature type="compositionally biased region" description="Low complexity" evidence="2">
    <location>
        <begin position="37"/>
        <end position="62"/>
    </location>
</feature>
<feature type="sequence conflict" description="In Ref. 2; AAO92260." evidence="6" ref="2">
    <original>E</original>
    <variation>G</variation>
    <location>
        <position position="328"/>
    </location>
</feature>
<feature type="sequence conflict" description="In Ref. 2; AAO92260." evidence="6" ref="2">
    <original>A</original>
    <variation>V</variation>
    <location>
        <position position="394"/>
    </location>
</feature>
<feature type="sequence conflict" description="In Ref. 2; AAO92260." evidence="6" ref="2">
    <original>D</original>
    <variation>H</variation>
    <location>
        <position position="414"/>
    </location>
</feature>